<sequence length="632" mass="69998">MHSDAPTPVANELSEVSHLAEGDNASFSAGNFTVLQLPSDPSHCIDYAIPAGTLVIVDPNNPDNNRTVKLQAPAVFRPQCALGGTRAPAPRPEESFPDWSEYQKYHHNDRRDPFYGSVTPIAYTIAASTVTAWMLLIILFLSRKPSPLFQKIAVLITAVSLTVFLAQATDTLESQYNEGYQNAYELRHKIMGGWAFRILQVITCVITWLARLQVVIRLFDVPKINTRLAVVGSTLIFTNATIWACLNLIPPWSQYVRNAKSVLPVFGALCSLLLEVFYLVVVVIYSISKRKYAYSRTSIVMAAISWLAMILPMVFIVFDIAHYWIAGWSDFIRWTADAAASVVVWEWTNVIVYQERREQRQSVLGRQVYRDEILDFKGDNGGGTVGGGRTKYPSRMEEDDVPFRSSPNDHHFTSNIPTSAGEGQSFQFFKRARLPMYSRKIWKIARGESAASNNTHYEHAIIEEEEEESIERNRRTPTVQENGEEDDEETYDEENDQYSQDNHSSVHSFESSRPSQHPVPSSGGTRAVGHTHFPLPGQSEGAHTTSPAAAAAAAEPEPEPVAGPSGGAAAHGDSDDDSDNSDDSSLASFTVIQQTGFSVDNQGVPEYDADSAPPTFEPIPGFHRQDYSDAKG</sequence>
<feature type="chain" id="PRO_0000058204" description="pH-response regulator protein palH/RIM21">
    <location>
        <begin position="1"/>
        <end position="632"/>
    </location>
</feature>
<feature type="topological domain" description="Extracellular" evidence="2">
    <location>
        <begin position="1"/>
        <end position="120"/>
    </location>
</feature>
<feature type="transmembrane region" description="Helical" evidence="2">
    <location>
        <begin position="121"/>
        <end position="141"/>
    </location>
</feature>
<feature type="topological domain" description="Cytoplasmic" evidence="2">
    <location>
        <begin position="142"/>
        <end position="145"/>
    </location>
</feature>
<feature type="transmembrane region" description="Helical" evidence="2">
    <location>
        <begin position="146"/>
        <end position="166"/>
    </location>
</feature>
<feature type="topological domain" description="Extracellular" evidence="2">
    <location>
        <begin position="167"/>
        <end position="189"/>
    </location>
</feature>
<feature type="transmembrane region" description="Helical" evidence="2">
    <location>
        <begin position="190"/>
        <end position="210"/>
    </location>
</feature>
<feature type="topological domain" description="Cytoplasmic" evidence="2">
    <location>
        <begin position="211"/>
        <end position="228"/>
    </location>
</feature>
<feature type="transmembrane region" description="Helical" evidence="2">
    <location>
        <begin position="229"/>
        <end position="249"/>
    </location>
</feature>
<feature type="topological domain" description="Extracellular" evidence="2">
    <location>
        <begin position="250"/>
        <end position="264"/>
    </location>
</feature>
<feature type="transmembrane region" description="Helical" evidence="2">
    <location>
        <begin position="265"/>
        <end position="285"/>
    </location>
</feature>
<feature type="topological domain" description="Cytoplasmic" evidence="2">
    <location>
        <begin position="286"/>
        <end position="297"/>
    </location>
</feature>
<feature type="transmembrane region" description="Helical" evidence="2">
    <location>
        <begin position="298"/>
        <end position="318"/>
    </location>
</feature>
<feature type="topological domain" description="Extracellular" evidence="2">
    <location>
        <begin position="319"/>
        <end position="330"/>
    </location>
</feature>
<feature type="transmembrane region" description="Helical" evidence="2">
    <location>
        <begin position="331"/>
        <end position="352"/>
    </location>
</feature>
<feature type="topological domain" description="Cytoplasmic" evidence="2">
    <location>
        <begin position="353"/>
        <end position="632"/>
    </location>
</feature>
<feature type="region of interest" description="Disordered" evidence="3">
    <location>
        <begin position="380"/>
        <end position="419"/>
    </location>
</feature>
<feature type="region of interest" description="Disordered" evidence="3">
    <location>
        <begin position="462"/>
        <end position="632"/>
    </location>
</feature>
<feature type="compositionally biased region" description="Gly residues" evidence="3">
    <location>
        <begin position="380"/>
        <end position="389"/>
    </location>
</feature>
<feature type="compositionally biased region" description="Acidic residues" evidence="3">
    <location>
        <begin position="482"/>
        <end position="496"/>
    </location>
</feature>
<feature type="compositionally biased region" description="Polar residues" evidence="3">
    <location>
        <begin position="497"/>
        <end position="524"/>
    </location>
</feature>
<feature type="compositionally biased region" description="Low complexity" evidence="3">
    <location>
        <begin position="546"/>
        <end position="571"/>
    </location>
</feature>
<feature type="compositionally biased region" description="Polar residues" evidence="3">
    <location>
        <begin position="590"/>
        <end position="601"/>
    </location>
</feature>
<feature type="compositionally biased region" description="Basic and acidic residues" evidence="3">
    <location>
        <begin position="623"/>
        <end position="632"/>
    </location>
</feature>
<feature type="sequence conflict" description="In Ref. 1; CAB59339." evidence="5" ref="1">
    <original>L</original>
    <variation>F</variation>
    <location>
        <position position="248"/>
    </location>
</feature>
<feature type="sequence conflict" description="In Ref. 1; CAB59339." evidence="5" ref="1">
    <original>H</original>
    <variation>N</variation>
    <location>
        <position position="543"/>
    </location>
</feature>
<keyword id="KW-1003">Cell membrane</keyword>
<keyword id="KW-0472">Membrane</keyword>
<keyword id="KW-1185">Reference proteome</keyword>
<keyword id="KW-0812">Transmembrane</keyword>
<keyword id="KW-1133">Transmembrane helix</keyword>
<gene>
    <name type="primary">RIM21</name>
    <name type="synonym">PAL2</name>
    <name type="ordered locus">YALI0F12397g</name>
</gene>
<reference key="1">
    <citation type="journal article" date="2000" name="Mol. Gen. Genet.">
        <title>Ambient pH signalling in ascomycetous yeasts involves homologues of the Aspergillus nidulans genes palF and palH.</title>
        <authorList>
            <person name="Treton B."/>
            <person name="Blanchin-Roland S."/>
            <person name="Lambert M."/>
            <person name="Lepingle A."/>
            <person name="Gaillardin C."/>
        </authorList>
    </citation>
    <scope>NUCLEOTIDE SEQUENCE [GENOMIC DNA]</scope>
    <scope>FUNCTION</scope>
    <source>
        <strain>ATCC 20460 / W29 / CBS 7504 / IFP29</strain>
    </source>
</reference>
<reference key="2">
    <citation type="journal article" date="2004" name="Nature">
        <title>Genome evolution in yeasts.</title>
        <authorList>
            <person name="Dujon B."/>
            <person name="Sherman D."/>
            <person name="Fischer G."/>
            <person name="Durrens P."/>
            <person name="Casaregola S."/>
            <person name="Lafontaine I."/>
            <person name="de Montigny J."/>
            <person name="Marck C."/>
            <person name="Neuveglise C."/>
            <person name="Talla E."/>
            <person name="Goffard N."/>
            <person name="Frangeul L."/>
            <person name="Aigle M."/>
            <person name="Anthouard V."/>
            <person name="Babour A."/>
            <person name="Barbe V."/>
            <person name="Barnay S."/>
            <person name="Blanchin S."/>
            <person name="Beckerich J.-M."/>
            <person name="Beyne E."/>
            <person name="Bleykasten C."/>
            <person name="Boisrame A."/>
            <person name="Boyer J."/>
            <person name="Cattolico L."/>
            <person name="Confanioleri F."/>
            <person name="de Daruvar A."/>
            <person name="Despons L."/>
            <person name="Fabre E."/>
            <person name="Fairhead C."/>
            <person name="Ferry-Dumazet H."/>
            <person name="Groppi A."/>
            <person name="Hantraye F."/>
            <person name="Hennequin C."/>
            <person name="Jauniaux N."/>
            <person name="Joyet P."/>
            <person name="Kachouri R."/>
            <person name="Kerrest A."/>
            <person name="Koszul R."/>
            <person name="Lemaire M."/>
            <person name="Lesur I."/>
            <person name="Ma L."/>
            <person name="Muller H."/>
            <person name="Nicaud J.-M."/>
            <person name="Nikolski M."/>
            <person name="Oztas S."/>
            <person name="Ozier-Kalogeropoulos O."/>
            <person name="Pellenz S."/>
            <person name="Potier S."/>
            <person name="Richard G.-F."/>
            <person name="Straub M.-L."/>
            <person name="Suleau A."/>
            <person name="Swennen D."/>
            <person name="Tekaia F."/>
            <person name="Wesolowski-Louvel M."/>
            <person name="Westhof E."/>
            <person name="Wirth B."/>
            <person name="Zeniou-Meyer M."/>
            <person name="Zivanovic Y."/>
            <person name="Bolotin-Fukuhara M."/>
            <person name="Thierry A."/>
            <person name="Bouchier C."/>
            <person name="Caudron B."/>
            <person name="Scarpelli C."/>
            <person name="Gaillardin C."/>
            <person name="Weissenbach J."/>
            <person name="Wincker P."/>
            <person name="Souciet J.-L."/>
        </authorList>
    </citation>
    <scope>NUCLEOTIDE SEQUENCE [LARGE SCALE GENOMIC DNA]</scope>
    <source>
        <strain>CLIB 122 / E 150</strain>
    </source>
</reference>
<dbReference type="EMBL" id="AJ133771">
    <property type="protein sequence ID" value="CAB59339.1"/>
    <property type="molecule type" value="Genomic_DNA"/>
</dbReference>
<dbReference type="EMBL" id="CR382132">
    <property type="protein sequence ID" value="CAG78136.1"/>
    <property type="molecule type" value="Genomic_DNA"/>
</dbReference>
<dbReference type="RefSeq" id="XP_505329.1">
    <property type="nucleotide sequence ID" value="XM_505329.1"/>
</dbReference>
<dbReference type="STRING" id="284591.Q9UVF6"/>
<dbReference type="EnsemblFungi" id="CAG78136">
    <property type="protein sequence ID" value="CAG78136"/>
    <property type="gene ID" value="YALI0_F12397g"/>
</dbReference>
<dbReference type="KEGG" id="yli:2908960"/>
<dbReference type="VEuPathDB" id="FungiDB:YALI0_F12397g"/>
<dbReference type="HOGENOM" id="CLU_432938_0_0_1"/>
<dbReference type="InParanoid" id="Q9UVF6"/>
<dbReference type="OrthoDB" id="10400at4891"/>
<dbReference type="Proteomes" id="UP000001300">
    <property type="component" value="Chromosome F"/>
</dbReference>
<dbReference type="GO" id="GO:0005886">
    <property type="term" value="C:plasma membrane"/>
    <property type="evidence" value="ECO:0000318"/>
    <property type="project" value="GO_Central"/>
</dbReference>
<dbReference type="GO" id="GO:0071467">
    <property type="term" value="P:cellular response to pH"/>
    <property type="evidence" value="ECO:0000318"/>
    <property type="project" value="GO_Central"/>
</dbReference>
<dbReference type="InterPro" id="IPR014844">
    <property type="entry name" value="PalH"/>
</dbReference>
<dbReference type="PANTHER" id="PTHR35779">
    <property type="entry name" value="PH-RESPONSE REGULATOR PROTEIN PALH/RIM21"/>
    <property type="match status" value="1"/>
</dbReference>
<dbReference type="PANTHER" id="PTHR35779:SF1">
    <property type="entry name" value="PH-RESPONSE REGULATOR PROTEIN PALH_RIM21"/>
    <property type="match status" value="1"/>
</dbReference>
<dbReference type="Pfam" id="PF08733">
    <property type="entry name" value="PalH"/>
    <property type="match status" value="1"/>
</dbReference>
<comment type="function">
    <text evidence="4">Required for the proteolytic cleavage of the transcription factor RIM101 in response to alkaline ambient pH.</text>
</comment>
<comment type="subcellular location">
    <subcellularLocation>
        <location evidence="1">Cell membrane</location>
        <topology evidence="1">Multi-pass membrane protein</topology>
    </subcellularLocation>
</comment>
<comment type="similarity">
    <text evidence="5">Belongs to the palH/RIM21 family.</text>
</comment>
<proteinExistence type="inferred from homology"/>
<accession>Q9UVF6</accession>
<accession>Q6C1Y3</accession>
<organism>
    <name type="scientific">Yarrowia lipolytica (strain CLIB 122 / E 150)</name>
    <name type="common">Yeast</name>
    <name type="synonym">Candida lipolytica</name>
    <dbReference type="NCBI Taxonomy" id="284591"/>
    <lineage>
        <taxon>Eukaryota</taxon>
        <taxon>Fungi</taxon>
        <taxon>Dikarya</taxon>
        <taxon>Ascomycota</taxon>
        <taxon>Saccharomycotina</taxon>
        <taxon>Dipodascomycetes</taxon>
        <taxon>Dipodascales</taxon>
        <taxon>Dipodascales incertae sedis</taxon>
        <taxon>Yarrowia</taxon>
    </lineage>
</organism>
<protein>
    <recommendedName>
        <fullName>pH-response regulator protein palH/RIM21</fullName>
    </recommendedName>
</protein>
<name>PALH_YARLI</name>
<evidence type="ECO:0000250" key="1"/>
<evidence type="ECO:0000255" key="2"/>
<evidence type="ECO:0000256" key="3">
    <source>
        <dbReference type="SAM" id="MobiDB-lite"/>
    </source>
</evidence>
<evidence type="ECO:0000269" key="4">
    <source>
    </source>
</evidence>
<evidence type="ECO:0000305" key="5"/>